<comment type="function">
    <text evidence="1">Can catalyze the hydrolysis of ATP in the presence of single-stranded DNA, the ATP-dependent uptake of single-stranded DNA by duplex DNA, and the ATP-dependent hybridization of homologous single-stranded DNAs. It interacts with LexA causing its activation and leading to its autocatalytic cleavage.</text>
</comment>
<comment type="subcellular location">
    <subcellularLocation>
        <location evidence="1">Cytoplasm</location>
    </subcellularLocation>
</comment>
<comment type="similarity">
    <text evidence="1">Belongs to the RecA family.</text>
</comment>
<name>RECA_BORPD</name>
<gene>
    <name evidence="1" type="primary">recA</name>
    <name type="ordered locus">Bpet2056</name>
</gene>
<keyword id="KW-0067">ATP-binding</keyword>
<keyword id="KW-0963">Cytoplasm</keyword>
<keyword id="KW-0227">DNA damage</keyword>
<keyword id="KW-0233">DNA recombination</keyword>
<keyword id="KW-0234">DNA repair</keyword>
<keyword id="KW-0238">DNA-binding</keyword>
<keyword id="KW-0547">Nucleotide-binding</keyword>
<keyword id="KW-0742">SOS response</keyword>
<protein>
    <recommendedName>
        <fullName evidence="1">Protein RecA</fullName>
    </recommendedName>
    <alternativeName>
        <fullName evidence="1">Recombinase A</fullName>
    </alternativeName>
</protein>
<accession>A9IKD2</accession>
<feature type="chain" id="PRO_1000114316" description="Protein RecA">
    <location>
        <begin position="1"/>
        <end position="357"/>
    </location>
</feature>
<feature type="binding site" evidence="1">
    <location>
        <begin position="74"/>
        <end position="81"/>
    </location>
    <ligand>
        <name>ATP</name>
        <dbReference type="ChEBI" id="CHEBI:30616"/>
    </ligand>
</feature>
<reference key="1">
    <citation type="journal article" date="2008" name="BMC Genomics">
        <title>The missing link: Bordetella petrii is endowed with both the metabolic versatility of environmental bacteria and virulence traits of pathogenic Bordetellae.</title>
        <authorList>
            <person name="Gross R."/>
            <person name="Guzman C.A."/>
            <person name="Sebaihia M."/>
            <person name="Martin dos Santos V.A.P."/>
            <person name="Pieper D.H."/>
            <person name="Koebnik R."/>
            <person name="Lechner M."/>
            <person name="Bartels D."/>
            <person name="Buhrmester J."/>
            <person name="Choudhuri J.V."/>
            <person name="Ebensen T."/>
            <person name="Gaigalat L."/>
            <person name="Herrmann S."/>
            <person name="Khachane A.N."/>
            <person name="Larisch C."/>
            <person name="Link S."/>
            <person name="Linke B."/>
            <person name="Meyer F."/>
            <person name="Mormann S."/>
            <person name="Nakunst D."/>
            <person name="Rueckert C."/>
            <person name="Schneiker-Bekel S."/>
            <person name="Schulze K."/>
            <person name="Voerholter F.-J."/>
            <person name="Yevsa T."/>
            <person name="Engle J.T."/>
            <person name="Goldman W.E."/>
            <person name="Puehler A."/>
            <person name="Goebel U.B."/>
            <person name="Goesmann A."/>
            <person name="Bloecker H."/>
            <person name="Kaiser O."/>
            <person name="Martinez-Arias R."/>
        </authorList>
    </citation>
    <scope>NUCLEOTIDE SEQUENCE [LARGE SCALE GENOMIC DNA]</scope>
    <source>
        <strain>ATCC BAA-461 / DSM 12804 / CCUG 43448</strain>
    </source>
</reference>
<dbReference type="EMBL" id="AM902716">
    <property type="protein sequence ID" value="CAP42396.1"/>
    <property type="molecule type" value="Genomic_DNA"/>
</dbReference>
<dbReference type="SMR" id="A9IKD2"/>
<dbReference type="STRING" id="94624.Bpet2056"/>
<dbReference type="KEGG" id="bpt:Bpet2056"/>
<dbReference type="eggNOG" id="COG0468">
    <property type="taxonomic scope" value="Bacteria"/>
</dbReference>
<dbReference type="Proteomes" id="UP000001225">
    <property type="component" value="Chromosome"/>
</dbReference>
<dbReference type="GO" id="GO:0005829">
    <property type="term" value="C:cytosol"/>
    <property type="evidence" value="ECO:0007669"/>
    <property type="project" value="TreeGrafter"/>
</dbReference>
<dbReference type="GO" id="GO:0005524">
    <property type="term" value="F:ATP binding"/>
    <property type="evidence" value="ECO:0007669"/>
    <property type="project" value="UniProtKB-UniRule"/>
</dbReference>
<dbReference type="GO" id="GO:0016887">
    <property type="term" value="F:ATP hydrolysis activity"/>
    <property type="evidence" value="ECO:0007669"/>
    <property type="project" value="InterPro"/>
</dbReference>
<dbReference type="GO" id="GO:0140664">
    <property type="term" value="F:ATP-dependent DNA damage sensor activity"/>
    <property type="evidence" value="ECO:0007669"/>
    <property type="project" value="InterPro"/>
</dbReference>
<dbReference type="GO" id="GO:0003684">
    <property type="term" value="F:damaged DNA binding"/>
    <property type="evidence" value="ECO:0007669"/>
    <property type="project" value="UniProtKB-UniRule"/>
</dbReference>
<dbReference type="GO" id="GO:0003697">
    <property type="term" value="F:single-stranded DNA binding"/>
    <property type="evidence" value="ECO:0007669"/>
    <property type="project" value="UniProtKB-UniRule"/>
</dbReference>
<dbReference type="GO" id="GO:0006310">
    <property type="term" value="P:DNA recombination"/>
    <property type="evidence" value="ECO:0007669"/>
    <property type="project" value="UniProtKB-UniRule"/>
</dbReference>
<dbReference type="GO" id="GO:0006281">
    <property type="term" value="P:DNA repair"/>
    <property type="evidence" value="ECO:0007669"/>
    <property type="project" value="UniProtKB-UniRule"/>
</dbReference>
<dbReference type="GO" id="GO:0009432">
    <property type="term" value="P:SOS response"/>
    <property type="evidence" value="ECO:0007669"/>
    <property type="project" value="UniProtKB-UniRule"/>
</dbReference>
<dbReference type="CDD" id="cd00983">
    <property type="entry name" value="RecA"/>
    <property type="match status" value="1"/>
</dbReference>
<dbReference type="FunFam" id="3.40.50.300:FF:000087">
    <property type="entry name" value="Recombinase RecA"/>
    <property type="match status" value="1"/>
</dbReference>
<dbReference type="Gene3D" id="3.40.50.300">
    <property type="entry name" value="P-loop containing nucleotide triphosphate hydrolases"/>
    <property type="match status" value="1"/>
</dbReference>
<dbReference type="HAMAP" id="MF_00268">
    <property type="entry name" value="RecA"/>
    <property type="match status" value="1"/>
</dbReference>
<dbReference type="InterPro" id="IPR003593">
    <property type="entry name" value="AAA+_ATPase"/>
</dbReference>
<dbReference type="InterPro" id="IPR013765">
    <property type="entry name" value="DNA_recomb/repair_RecA"/>
</dbReference>
<dbReference type="InterPro" id="IPR020584">
    <property type="entry name" value="DNA_recomb/repair_RecA_CS"/>
</dbReference>
<dbReference type="InterPro" id="IPR027417">
    <property type="entry name" value="P-loop_NTPase"/>
</dbReference>
<dbReference type="InterPro" id="IPR049261">
    <property type="entry name" value="RecA-like_C"/>
</dbReference>
<dbReference type="InterPro" id="IPR049428">
    <property type="entry name" value="RecA-like_N"/>
</dbReference>
<dbReference type="InterPro" id="IPR020588">
    <property type="entry name" value="RecA_ATP-bd"/>
</dbReference>
<dbReference type="InterPro" id="IPR023400">
    <property type="entry name" value="RecA_C_sf"/>
</dbReference>
<dbReference type="InterPro" id="IPR020587">
    <property type="entry name" value="RecA_monomer-monomer_interface"/>
</dbReference>
<dbReference type="NCBIfam" id="TIGR02012">
    <property type="entry name" value="tigrfam_recA"/>
    <property type="match status" value="1"/>
</dbReference>
<dbReference type="PANTHER" id="PTHR45900:SF1">
    <property type="entry name" value="MITOCHONDRIAL DNA REPAIR PROTEIN RECA HOMOLOG-RELATED"/>
    <property type="match status" value="1"/>
</dbReference>
<dbReference type="PANTHER" id="PTHR45900">
    <property type="entry name" value="RECA"/>
    <property type="match status" value="1"/>
</dbReference>
<dbReference type="Pfam" id="PF00154">
    <property type="entry name" value="RecA"/>
    <property type="match status" value="1"/>
</dbReference>
<dbReference type="Pfam" id="PF21096">
    <property type="entry name" value="RecA_C"/>
    <property type="match status" value="1"/>
</dbReference>
<dbReference type="PRINTS" id="PR00142">
    <property type="entry name" value="RECA"/>
</dbReference>
<dbReference type="SMART" id="SM00382">
    <property type="entry name" value="AAA"/>
    <property type="match status" value="1"/>
</dbReference>
<dbReference type="SUPFAM" id="SSF52540">
    <property type="entry name" value="P-loop containing nucleoside triphosphate hydrolases"/>
    <property type="match status" value="1"/>
</dbReference>
<dbReference type="SUPFAM" id="SSF54752">
    <property type="entry name" value="RecA protein, C-terminal domain"/>
    <property type="match status" value="1"/>
</dbReference>
<dbReference type="PROSITE" id="PS00321">
    <property type="entry name" value="RECA_1"/>
    <property type="match status" value="1"/>
</dbReference>
<dbReference type="PROSITE" id="PS50162">
    <property type="entry name" value="RECA_2"/>
    <property type="match status" value="1"/>
</dbReference>
<dbReference type="PROSITE" id="PS50163">
    <property type="entry name" value="RECA_3"/>
    <property type="match status" value="1"/>
</dbReference>
<organism>
    <name type="scientific">Bordetella petrii (strain ATCC BAA-461 / DSM 12804 / CCUG 43448)</name>
    <dbReference type="NCBI Taxonomy" id="340100"/>
    <lineage>
        <taxon>Bacteria</taxon>
        <taxon>Pseudomonadati</taxon>
        <taxon>Pseudomonadota</taxon>
        <taxon>Betaproteobacteria</taxon>
        <taxon>Burkholderiales</taxon>
        <taxon>Alcaligenaceae</taxon>
        <taxon>Bordetella</taxon>
    </lineage>
</organism>
<proteinExistence type="inferred from homology"/>
<evidence type="ECO:0000255" key="1">
    <source>
        <dbReference type="HAMAP-Rule" id="MF_00268"/>
    </source>
</evidence>
<sequence>MNDKSSKAAASEKAKALAAALSQIEKQFGKGSIMRYGDNEVEHDIQVVSTGSLGLDIALGVGGLPRGRVIEIYGPESSGKTTLTLQVIAEMQKIGGTCAFVDAEHALDVQYAAKLGVNLTDLLISQPDTGEQALEITDALVRSGSVDLIVIDSVAALVPKAEIEGEMGDSLPGLQARLMSQALRKLTATIKRTNCMVIFINQIRMKIGVMFGNPETTTGGNALKFYSSVRLDIRRIGSIKKGEEVVGNETRVKVVKNKVSPPFKQAEFDIMYGAGISREGEIIDLGVQAGVVDKSGAWYSYSGTRIGQGKDNVREYLKEHPELAVEIENKVRENQGIVSRAATFPASEAEAEDDGQA</sequence>